<reference key="1">
    <citation type="journal article" date="2009" name="J. Bacteriol.">
        <title>Genome sequence of Azotobacter vinelandii, an obligate aerobe specialized to support diverse anaerobic metabolic processes.</title>
        <authorList>
            <person name="Setubal J.C."/>
            <person name="Dos Santos P."/>
            <person name="Goldman B.S."/>
            <person name="Ertesvaag H."/>
            <person name="Espin G."/>
            <person name="Rubio L.M."/>
            <person name="Valla S."/>
            <person name="Almeida N.F."/>
            <person name="Balasubramanian D."/>
            <person name="Cromes L."/>
            <person name="Curatti L."/>
            <person name="Du Z."/>
            <person name="Godsy E."/>
            <person name="Goodner B."/>
            <person name="Hellner-Burris K."/>
            <person name="Hernandez J.A."/>
            <person name="Houmiel K."/>
            <person name="Imperial J."/>
            <person name="Kennedy C."/>
            <person name="Larson T.J."/>
            <person name="Latreille P."/>
            <person name="Ligon L.S."/>
            <person name="Lu J."/>
            <person name="Maerk M."/>
            <person name="Miller N.M."/>
            <person name="Norton S."/>
            <person name="O'Carroll I.P."/>
            <person name="Paulsen I."/>
            <person name="Raulfs E.C."/>
            <person name="Roemer R."/>
            <person name="Rosser J."/>
            <person name="Segura D."/>
            <person name="Slater S."/>
            <person name="Stricklin S.L."/>
            <person name="Studholme D.J."/>
            <person name="Sun J."/>
            <person name="Viana C.J."/>
            <person name="Wallin E."/>
            <person name="Wang B."/>
            <person name="Wheeler C."/>
            <person name="Zhu H."/>
            <person name="Dean D.R."/>
            <person name="Dixon R."/>
            <person name="Wood D."/>
        </authorList>
    </citation>
    <scope>NUCLEOTIDE SEQUENCE [LARGE SCALE GENOMIC DNA]</scope>
    <source>
        <strain>DJ / ATCC BAA-1303</strain>
    </source>
</reference>
<keyword id="KW-0131">Cell cycle</keyword>
<keyword id="KW-0132">Cell division</keyword>
<keyword id="KW-0997">Cell inner membrane</keyword>
<keyword id="KW-1003">Cell membrane</keyword>
<keyword id="KW-0472">Membrane</keyword>
<keyword id="KW-0812">Transmembrane</keyword>
<keyword id="KW-1133">Transmembrane helix</keyword>
<evidence type="ECO:0000255" key="1">
    <source>
        <dbReference type="HAMAP-Rule" id="MF_00509"/>
    </source>
</evidence>
<evidence type="ECO:0000256" key="2">
    <source>
        <dbReference type="SAM" id="MobiDB-lite"/>
    </source>
</evidence>
<comment type="function">
    <text evidence="1">Essential cell division protein that stabilizes the FtsZ protofilaments by cross-linking them and that serves as a cytoplasmic membrane anchor for the Z ring. Also required for the recruitment to the septal ring of downstream cell division proteins.</text>
</comment>
<comment type="subunit">
    <text evidence="1">Interacts with FtsZ via their C-terminal domains.</text>
</comment>
<comment type="subcellular location">
    <subcellularLocation>
        <location evidence="1">Cell inner membrane</location>
        <topology evidence="1">Single-pass type I membrane protein</topology>
    </subcellularLocation>
    <text evidence="1">Localizes to the Z ring in an FtsZ-dependent manner.</text>
</comment>
<comment type="similarity">
    <text evidence="1">Belongs to the ZipA family.</text>
</comment>
<gene>
    <name evidence="1" type="primary">zipA</name>
    <name type="ordered locus">Avin_30300</name>
</gene>
<proteinExistence type="inferred from homology"/>
<name>ZIPA_AZOVD</name>
<organism>
    <name type="scientific">Azotobacter vinelandii (strain DJ / ATCC BAA-1303)</name>
    <dbReference type="NCBI Taxonomy" id="322710"/>
    <lineage>
        <taxon>Bacteria</taxon>
        <taxon>Pseudomonadati</taxon>
        <taxon>Pseudomonadota</taxon>
        <taxon>Gammaproteobacteria</taxon>
        <taxon>Pseudomonadales</taxon>
        <taxon>Pseudomonadaceae</taxon>
        <taxon>Azotobacter</taxon>
    </lineage>
</organism>
<protein>
    <recommendedName>
        <fullName evidence="1">Cell division protein ZipA</fullName>
    </recommendedName>
</protein>
<accession>C1DN28</accession>
<dbReference type="EMBL" id="CP001157">
    <property type="protein sequence ID" value="ACO79195.1"/>
    <property type="molecule type" value="Genomic_DNA"/>
</dbReference>
<dbReference type="RefSeq" id="WP_012701581.1">
    <property type="nucleotide sequence ID" value="NC_012560.1"/>
</dbReference>
<dbReference type="SMR" id="C1DN28"/>
<dbReference type="STRING" id="322710.Avin_30300"/>
<dbReference type="EnsemblBacteria" id="ACO79195">
    <property type="protein sequence ID" value="ACO79195"/>
    <property type="gene ID" value="Avin_30300"/>
</dbReference>
<dbReference type="GeneID" id="88186122"/>
<dbReference type="KEGG" id="avn:Avin_30300"/>
<dbReference type="eggNOG" id="COG3115">
    <property type="taxonomic scope" value="Bacteria"/>
</dbReference>
<dbReference type="HOGENOM" id="CLU_030174_0_1_6"/>
<dbReference type="OrthoDB" id="7054914at2"/>
<dbReference type="Proteomes" id="UP000002424">
    <property type="component" value="Chromosome"/>
</dbReference>
<dbReference type="GO" id="GO:0032153">
    <property type="term" value="C:cell division site"/>
    <property type="evidence" value="ECO:0007669"/>
    <property type="project" value="UniProtKB-UniRule"/>
</dbReference>
<dbReference type="GO" id="GO:0005886">
    <property type="term" value="C:plasma membrane"/>
    <property type="evidence" value="ECO:0007669"/>
    <property type="project" value="UniProtKB-SubCell"/>
</dbReference>
<dbReference type="GO" id="GO:0000917">
    <property type="term" value="P:division septum assembly"/>
    <property type="evidence" value="ECO:0007669"/>
    <property type="project" value="TreeGrafter"/>
</dbReference>
<dbReference type="GO" id="GO:0043093">
    <property type="term" value="P:FtsZ-dependent cytokinesis"/>
    <property type="evidence" value="ECO:0007669"/>
    <property type="project" value="UniProtKB-UniRule"/>
</dbReference>
<dbReference type="Gene3D" id="3.30.1400.10">
    <property type="entry name" value="ZipA, C-terminal FtsZ-binding domain"/>
    <property type="match status" value="1"/>
</dbReference>
<dbReference type="HAMAP" id="MF_00509">
    <property type="entry name" value="ZipA"/>
    <property type="match status" value="1"/>
</dbReference>
<dbReference type="InterPro" id="IPR011919">
    <property type="entry name" value="Cell_div_ZipA"/>
</dbReference>
<dbReference type="InterPro" id="IPR007449">
    <property type="entry name" value="ZipA_FtsZ-bd_C"/>
</dbReference>
<dbReference type="InterPro" id="IPR036765">
    <property type="entry name" value="ZipA_FtsZ-bd_C_sf"/>
</dbReference>
<dbReference type="NCBIfam" id="TIGR02205">
    <property type="entry name" value="septum_zipA"/>
    <property type="match status" value="1"/>
</dbReference>
<dbReference type="PANTHER" id="PTHR38685">
    <property type="entry name" value="CELL DIVISION PROTEIN ZIPA"/>
    <property type="match status" value="1"/>
</dbReference>
<dbReference type="PANTHER" id="PTHR38685:SF1">
    <property type="entry name" value="CELL DIVISION PROTEIN ZIPA"/>
    <property type="match status" value="1"/>
</dbReference>
<dbReference type="Pfam" id="PF04354">
    <property type="entry name" value="ZipA_C"/>
    <property type="match status" value="1"/>
</dbReference>
<dbReference type="SMART" id="SM00771">
    <property type="entry name" value="ZipA_C"/>
    <property type="match status" value="1"/>
</dbReference>
<dbReference type="SUPFAM" id="SSF64383">
    <property type="entry name" value="Cell-division protein ZipA, C-terminal domain"/>
    <property type="match status" value="1"/>
</dbReference>
<feature type="chain" id="PRO_1000206607" description="Cell division protein ZipA">
    <location>
        <begin position="1"/>
        <end position="285"/>
    </location>
</feature>
<feature type="topological domain" description="Periplasmic" evidence="1">
    <location>
        <position position="1"/>
    </location>
</feature>
<feature type="transmembrane region" description="Helical" evidence="1">
    <location>
        <begin position="2"/>
        <end position="22"/>
    </location>
</feature>
<feature type="topological domain" description="Cytoplasmic" evidence="1">
    <location>
        <begin position="23"/>
        <end position="285"/>
    </location>
</feature>
<feature type="region of interest" description="Disordered" evidence="2">
    <location>
        <begin position="49"/>
        <end position="88"/>
    </location>
</feature>
<sequence length="285" mass="32104">MEIGLREWLIVIGIVVIGGILFDGWRRMRGSKGKLKFKLERKIADAPEAVSENSELLGPSRSVDFPQGAGFEPDEENLPSLSVRGPSRRRLDDELDDLGLELDEPVHTAVAEPVSRLRAAEPKFESRRIEQPEHSEPRELPPIEEYLVIIVVSRDGAGFKGPALLQSILESGLRFGEKDIFHRHESLAGNGEVLFSMANALKPGTFDLDDIDHFSTRAVSFFLVLPGPRHPKQAFELMVAAARKLAQELNGELKDDQRSVMTAQTIEHYRQRIADFERRQLTHKR</sequence>